<organism>
    <name type="scientific">Methylorubrum extorquens (strain PA1)</name>
    <name type="common">Methylobacterium extorquens</name>
    <dbReference type="NCBI Taxonomy" id="419610"/>
    <lineage>
        <taxon>Bacteria</taxon>
        <taxon>Pseudomonadati</taxon>
        <taxon>Pseudomonadota</taxon>
        <taxon>Alphaproteobacteria</taxon>
        <taxon>Hyphomicrobiales</taxon>
        <taxon>Methylobacteriaceae</taxon>
        <taxon>Methylorubrum</taxon>
    </lineage>
</organism>
<proteinExistence type="inferred from homology"/>
<evidence type="ECO:0000255" key="1">
    <source>
        <dbReference type="HAMAP-Rule" id="MF_00036"/>
    </source>
</evidence>
<protein>
    <recommendedName>
        <fullName evidence="1">Alanine--tRNA ligase</fullName>
        <ecNumber evidence="1">6.1.1.7</ecNumber>
    </recommendedName>
    <alternativeName>
        <fullName evidence="1">Alanyl-tRNA synthetase</fullName>
        <shortName evidence="1">AlaRS</shortName>
    </alternativeName>
</protein>
<reference key="1">
    <citation type="submission" date="2007-12" db="EMBL/GenBank/DDBJ databases">
        <title>Complete sequence of Methylobacterium extorquens PA1.</title>
        <authorList>
            <consortium name="US DOE Joint Genome Institute"/>
            <person name="Copeland A."/>
            <person name="Lucas S."/>
            <person name="Lapidus A."/>
            <person name="Barry K."/>
            <person name="Glavina del Rio T."/>
            <person name="Dalin E."/>
            <person name="Tice H."/>
            <person name="Pitluck S."/>
            <person name="Saunders E."/>
            <person name="Brettin T."/>
            <person name="Bruce D."/>
            <person name="Detter J.C."/>
            <person name="Han C."/>
            <person name="Schmutz J."/>
            <person name="Larimer F."/>
            <person name="Land M."/>
            <person name="Hauser L."/>
            <person name="Kyrpides N."/>
            <person name="Kim E."/>
            <person name="Marx C."/>
            <person name="Richardson P."/>
        </authorList>
    </citation>
    <scope>NUCLEOTIDE SEQUENCE [LARGE SCALE GENOMIC DNA]</scope>
    <source>
        <strain>PA1</strain>
    </source>
</reference>
<sequence>MSGVNEIRSTFLDYFRDAGHAVVPSSSLVPKNDPTLMFTNAGMVQFKNVFTGVEKRPYVKATSSQKCVRAGGKHNDLDNVGYTARHHTFFEMLGNFSFGDYFKADAIELAWTLITKEFGLSPEKLLVTVYADDEEAAGLWRKIAGFSDEKIIRIGTSDNFWQMGDTGPCGPCSEIFIDQGPTLAGGPPGSPDEDGDRFLEFWNLVFMQYEQVEPGVRNSLPRPSIDTGMGLERMAAILQGVHSNYDTDLFRALIDAVAHAVSRAPEPSTRASYRVIADHLRSTSFLIADGVLPSNEGRGYVLRRIMRRAMRHLELLGARDPVMYRLVPTLVREMGQAFPELARSEALISETLRLEEGRFRKTLERGLAILDTETRDLAAGQNLSGETAFTLYDTYGFPLDLTQDALKARGIGVDTKAFDAAMLRQKQAARAAWQGSGEAATETVWFGIKERTGATEFLGYDTEAAEAVIGALLRDGAEVETLKAGENGIVVANQTPFYGESGGQVGDTGTISGPGLKARVTGTEKKLGDLFVHHVTVEEGTLAVGAAVELKVDHARRAAIRANHSATHLLHEALRQVLGDHVAQKGSLVAPERLRFDISHPKPIDEAELSRVEEIANAVLLQNAPVVTKLMAVDEAIESGARALFGEKYGDEVRVVSMGRPVDDEGREVEGRLPNFSIELCGGTHVSQLGEIGQITVLGESAVGAGVRRIEAMTGTAARRHRATESRTLSQLAGLLKAPVADVPERLSTLIEERRRLEKELADARKKIAMGGASGGGDEAREINGVKLMARVVEGVEMRDLKGLADEGKTRLGSGIVALVGVSADGKAGLVVGVTEDLTGRYDAVELVRAGAGHLGGKGGGGRRDMAQAGGPDGAGADAALAAIAEALAAG</sequence>
<dbReference type="EC" id="6.1.1.7" evidence="1"/>
<dbReference type="EMBL" id="CP000908">
    <property type="protein sequence ID" value="ABY30990.1"/>
    <property type="molecule type" value="Genomic_DNA"/>
</dbReference>
<dbReference type="RefSeq" id="WP_012253991.1">
    <property type="nucleotide sequence ID" value="NC_010172.1"/>
</dbReference>
<dbReference type="SMR" id="A9W5Y4"/>
<dbReference type="KEGG" id="mex:Mext_2598"/>
<dbReference type="eggNOG" id="COG0013">
    <property type="taxonomic scope" value="Bacteria"/>
</dbReference>
<dbReference type="HOGENOM" id="CLU_004485_1_1_5"/>
<dbReference type="BioCyc" id="MEXT419610:MEXT_RS13090-MONOMER"/>
<dbReference type="GO" id="GO:0005829">
    <property type="term" value="C:cytosol"/>
    <property type="evidence" value="ECO:0007669"/>
    <property type="project" value="TreeGrafter"/>
</dbReference>
<dbReference type="GO" id="GO:0004813">
    <property type="term" value="F:alanine-tRNA ligase activity"/>
    <property type="evidence" value="ECO:0007669"/>
    <property type="project" value="UniProtKB-UniRule"/>
</dbReference>
<dbReference type="GO" id="GO:0002161">
    <property type="term" value="F:aminoacyl-tRNA deacylase activity"/>
    <property type="evidence" value="ECO:0007669"/>
    <property type="project" value="TreeGrafter"/>
</dbReference>
<dbReference type="GO" id="GO:0005524">
    <property type="term" value="F:ATP binding"/>
    <property type="evidence" value="ECO:0007669"/>
    <property type="project" value="UniProtKB-UniRule"/>
</dbReference>
<dbReference type="GO" id="GO:0000049">
    <property type="term" value="F:tRNA binding"/>
    <property type="evidence" value="ECO:0007669"/>
    <property type="project" value="UniProtKB-KW"/>
</dbReference>
<dbReference type="GO" id="GO:0008270">
    <property type="term" value="F:zinc ion binding"/>
    <property type="evidence" value="ECO:0007669"/>
    <property type="project" value="UniProtKB-UniRule"/>
</dbReference>
<dbReference type="GO" id="GO:0006419">
    <property type="term" value="P:alanyl-tRNA aminoacylation"/>
    <property type="evidence" value="ECO:0007669"/>
    <property type="project" value="UniProtKB-UniRule"/>
</dbReference>
<dbReference type="GO" id="GO:0045892">
    <property type="term" value="P:negative regulation of DNA-templated transcription"/>
    <property type="evidence" value="ECO:0007669"/>
    <property type="project" value="TreeGrafter"/>
</dbReference>
<dbReference type="CDD" id="cd00673">
    <property type="entry name" value="AlaRS_core"/>
    <property type="match status" value="1"/>
</dbReference>
<dbReference type="FunFam" id="2.40.30.130:FF:000001">
    <property type="entry name" value="Alanine--tRNA ligase"/>
    <property type="match status" value="1"/>
</dbReference>
<dbReference type="FunFam" id="3.10.310.40:FF:000001">
    <property type="entry name" value="Alanine--tRNA ligase"/>
    <property type="match status" value="1"/>
</dbReference>
<dbReference type="FunFam" id="3.30.54.20:FF:000001">
    <property type="entry name" value="Alanine--tRNA ligase"/>
    <property type="match status" value="1"/>
</dbReference>
<dbReference type="FunFam" id="3.30.930.10:FF:000004">
    <property type="entry name" value="Alanine--tRNA ligase"/>
    <property type="match status" value="1"/>
</dbReference>
<dbReference type="FunFam" id="3.30.980.10:FF:000004">
    <property type="entry name" value="Alanine--tRNA ligase, cytoplasmic"/>
    <property type="match status" value="1"/>
</dbReference>
<dbReference type="Gene3D" id="2.40.30.130">
    <property type="match status" value="1"/>
</dbReference>
<dbReference type="Gene3D" id="3.10.310.40">
    <property type="match status" value="1"/>
</dbReference>
<dbReference type="Gene3D" id="3.30.54.20">
    <property type="match status" value="1"/>
</dbReference>
<dbReference type="Gene3D" id="6.10.250.550">
    <property type="match status" value="1"/>
</dbReference>
<dbReference type="Gene3D" id="3.30.930.10">
    <property type="entry name" value="Bira Bifunctional Protein, Domain 2"/>
    <property type="match status" value="1"/>
</dbReference>
<dbReference type="Gene3D" id="3.30.980.10">
    <property type="entry name" value="Threonyl-trna Synthetase, Chain A, domain 2"/>
    <property type="match status" value="1"/>
</dbReference>
<dbReference type="HAMAP" id="MF_00036_B">
    <property type="entry name" value="Ala_tRNA_synth_B"/>
    <property type="match status" value="1"/>
</dbReference>
<dbReference type="InterPro" id="IPR045864">
    <property type="entry name" value="aa-tRNA-synth_II/BPL/LPL"/>
</dbReference>
<dbReference type="InterPro" id="IPR002318">
    <property type="entry name" value="Ala-tRNA-lgiase_IIc"/>
</dbReference>
<dbReference type="InterPro" id="IPR018162">
    <property type="entry name" value="Ala-tRNA-ligase_IIc_anticod-bd"/>
</dbReference>
<dbReference type="InterPro" id="IPR018165">
    <property type="entry name" value="Ala-tRNA-synth_IIc_core"/>
</dbReference>
<dbReference type="InterPro" id="IPR018164">
    <property type="entry name" value="Ala-tRNA-synth_IIc_N"/>
</dbReference>
<dbReference type="InterPro" id="IPR050058">
    <property type="entry name" value="Ala-tRNA_ligase"/>
</dbReference>
<dbReference type="InterPro" id="IPR023033">
    <property type="entry name" value="Ala_tRNA_ligase_euk/bac"/>
</dbReference>
<dbReference type="InterPro" id="IPR003156">
    <property type="entry name" value="DHHA1_dom"/>
</dbReference>
<dbReference type="InterPro" id="IPR018163">
    <property type="entry name" value="Thr/Ala-tRNA-synth_IIc_edit"/>
</dbReference>
<dbReference type="InterPro" id="IPR009000">
    <property type="entry name" value="Transl_B-barrel_sf"/>
</dbReference>
<dbReference type="InterPro" id="IPR012947">
    <property type="entry name" value="tRNA_SAD"/>
</dbReference>
<dbReference type="NCBIfam" id="TIGR00344">
    <property type="entry name" value="alaS"/>
    <property type="match status" value="1"/>
</dbReference>
<dbReference type="PANTHER" id="PTHR11777:SF9">
    <property type="entry name" value="ALANINE--TRNA LIGASE, CYTOPLASMIC"/>
    <property type="match status" value="1"/>
</dbReference>
<dbReference type="PANTHER" id="PTHR11777">
    <property type="entry name" value="ALANYL-TRNA SYNTHETASE"/>
    <property type="match status" value="1"/>
</dbReference>
<dbReference type="Pfam" id="PF02272">
    <property type="entry name" value="DHHA1"/>
    <property type="match status" value="1"/>
</dbReference>
<dbReference type="Pfam" id="PF01411">
    <property type="entry name" value="tRNA-synt_2c"/>
    <property type="match status" value="1"/>
</dbReference>
<dbReference type="Pfam" id="PF07973">
    <property type="entry name" value="tRNA_SAD"/>
    <property type="match status" value="1"/>
</dbReference>
<dbReference type="PRINTS" id="PR00980">
    <property type="entry name" value="TRNASYNTHALA"/>
</dbReference>
<dbReference type="SMART" id="SM00863">
    <property type="entry name" value="tRNA_SAD"/>
    <property type="match status" value="1"/>
</dbReference>
<dbReference type="SUPFAM" id="SSF55681">
    <property type="entry name" value="Class II aaRS and biotin synthetases"/>
    <property type="match status" value="1"/>
</dbReference>
<dbReference type="SUPFAM" id="SSF101353">
    <property type="entry name" value="Putative anticodon-binding domain of alanyl-tRNA synthetase (AlaRS)"/>
    <property type="match status" value="1"/>
</dbReference>
<dbReference type="SUPFAM" id="SSF55186">
    <property type="entry name" value="ThrRS/AlaRS common domain"/>
    <property type="match status" value="1"/>
</dbReference>
<dbReference type="SUPFAM" id="SSF50447">
    <property type="entry name" value="Translation proteins"/>
    <property type="match status" value="1"/>
</dbReference>
<dbReference type="PROSITE" id="PS50860">
    <property type="entry name" value="AA_TRNA_LIGASE_II_ALA"/>
    <property type="match status" value="1"/>
</dbReference>
<keyword id="KW-0030">Aminoacyl-tRNA synthetase</keyword>
<keyword id="KW-0067">ATP-binding</keyword>
<keyword id="KW-0963">Cytoplasm</keyword>
<keyword id="KW-0436">Ligase</keyword>
<keyword id="KW-0479">Metal-binding</keyword>
<keyword id="KW-0547">Nucleotide-binding</keyword>
<keyword id="KW-0648">Protein biosynthesis</keyword>
<keyword id="KW-0694">RNA-binding</keyword>
<keyword id="KW-0820">tRNA-binding</keyword>
<keyword id="KW-0862">Zinc</keyword>
<name>SYA_METEP</name>
<feature type="chain" id="PRO_0000347672" description="Alanine--tRNA ligase">
    <location>
        <begin position="1"/>
        <end position="891"/>
    </location>
</feature>
<feature type="binding site" evidence="1">
    <location>
        <position position="564"/>
    </location>
    <ligand>
        <name>Zn(2+)</name>
        <dbReference type="ChEBI" id="CHEBI:29105"/>
    </ligand>
</feature>
<feature type="binding site" evidence="1">
    <location>
        <position position="568"/>
    </location>
    <ligand>
        <name>Zn(2+)</name>
        <dbReference type="ChEBI" id="CHEBI:29105"/>
    </ligand>
</feature>
<feature type="binding site" evidence="1">
    <location>
        <position position="681"/>
    </location>
    <ligand>
        <name>Zn(2+)</name>
        <dbReference type="ChEBI" id="CHEBI:29105"/>
    </ligand>
</feature>
<feature type="binding site" evidence="1">
    <location>
        <position position="685"/>
    </location>
    <ligand>
        <name>Zn(2+)</name>
        <dbReference type="ChEBI" id="CHEBI:29105"/>
    </ligand>
</feature>
<comment type="function">
    <text evidence="1">Catalyzes the attachment of alanine to tRNA(Ala) in a two-step reaction: alanine is first activated by ATP to form Ala-AMP and then transferred to the acceptor end of tRNA(Ala). Also edits incorrectly charged Ser-tRNA(Ala) and Gly-tRNA(Ala) via its editing domain.</text>
</comment>
<comment type="catalytic activity">
    <reaction evidence="1">
        <text>tRNA(Ala) + L-alanine + ATP = L-alanyl-tRNA(Ala) + AMP + diphosphate</text>
        <dbReference type="Rhea" id="RHEA:12540"/>
        <dbReference type="Rhea" id="RHEA-COMP:9657"/>
        <dbReference type="Rhea" id="RHEA-COMP:9923"/>
        <dbReference type="ChEBI" id="CHEBI:30616"/>
        <dbReference type="ChEBI" id="CHEBI:33019"/>
        <dbReference type="ChEBI" id="CHEBI:57972"/>
        <dbReference type="ChEBI" id="CHEBI:78442"/>
        <dbReference type="ChEBI" id="CHEBI:78497"/>
        <dbReference type="ChEBI" id="CHEBI:456215"/>
        <dbReference type="EC" id="6.1.1.7"/>
    </reaction>
</comment>
<comment type="cofactor">
    <cofactor evidence="1">
        <name>Zn(2+)</name>
        <dbReference type="ChEBI" id="CHEBI:29105"/>
    </cofactor>
    <text evidence="1">Binds 1 zinc ion per subunit.</text>
</comment>
<comment type="subcellular location">
    <subcellularLocation>
        <location evidence="1">Cytoplasm</location>
    </subcellularLocation>
</comment>
<comment type="domain">
    <text evidence="1">Consists of three domains; the N-terminal catalytic domain, the editing domain and the C-terminal C-Ala domain. The editing domain removes incorrectly charged amino acids, while the C-Ala domain, along with tRNA(Ala), serves as a bridge to cooperatively bring together the editing and aminoacylation centers thus stimulating deacylation of misacylated tRNAs.</text>
</comment>
<comment type="similarity">
    <text evidence="1">Belongs to the class-II aminoacyl-tRNA synthetase family.</text>
</comment>
<accession>A9W5Y4</accession>
<gene>
    <name evidence="1" type="primary">alaS</name>
    <name type="ordered locus">Mext_2598</name>
</gene>